<sequence>MADSTSMDHDGEQRGTKRKRDAGAGGSGAGIGKGTSNYVKEGYGPNMSEMVPRNIMNKGNHTVYHVVKQQKYLDFNYVSNQNPYIIPYQTAGFWASMWDQTDIGSNNTINIMKALNNVSVGVTWIKGEITFEVYAVTRQRLLTGTTNQTTWDFETSQNMFIADADREPENFNLATAAATGPLAQQTTQTLLFNANNDRYTKYELPQRNQYTREYDFQQLTNNYMWKPTDISAAANFRRLIPMAEGVYTTTAATTKMAELTEQKSVYAGSGKTTEASLFRNRTSYPRMHMAQPQVPDETGYMKFRYQVRMSTKLHLVFHLYPDYSTSTNIEYMGRQVLELPEVTATGGVVTCMPYEIKT</sequence>
<comment type="function">
    <text evidence="1">Capsid protein self-assembles to form an icosahedral capsid with a T=1 symmetry, about 22 nm in diameter, and consisting of 60 copies of size variants of the capsid proteins, which differ in the N-terminushe capsid encapsulates the genomic ssDNA. Capsid proteins are responsible for the attachment to host cell receptors. This attachment induces virion internalization predominantly through clathrin-dependent endocytosis (By similarity).</text>
</comment>
<comment type="subcellular location">
    <subcellularLocation>
        <location evidence="3">Virion</location>
    </subcellularLocation>
</comment>
<comment type="alternative products">
    <event type="alternative initiation"/>
    <isoform>
        <id>P27453-1</id>
        <name>VP1</name>
        <sequence type="displayed"/>
    </isoform>
    <isoform>
        <id>P27453-2</id>
        <name>VP2</name>
        <sequence type="not described"/>
    </isoform>
</comment>
<organismHost>
    <name type="scientific">Aedes</name>
    <dbReference type="NCBI Taxonomy" id="7158"/>
</organismHost>
<reference key="1">
    <citation type="journal article" date="1991" name="Virology">
        <title>Nucleotide sequence and genomic organization of Aedes densonucleosis virus.</title>
        <authorList>
            <person name="Afanasiev B.N."/>
            <person name="Galyov E.E."/>
            <person name="Buchatsky L.P."/>
            <person name="Kozlov Y.V."/>
        </authorList>
    </citation>
    <scope>NUCLEOTIDE SEQUENCE [GENOMIC DNA]</scope>
</reference>
<name>CAPSD_AEDEV</name>
<keyword id="KW-0024">Alternative initiation</keyword>
<keyword id="KW-0167">Capsid protein</keyword>
<keyword id="KW-1165">Clathrin-mediated endocytosis of virus by host</keyword>
<keyword id="KW-0945">Host-virus interaction</keyword>
<keyword id="KW-1140">T=1 icosahedral capsid protein</keyword>
<keyword id="KW-1161">Viral attachment to host cell</keyword>
<keyword id="KW-1162">Viral penetration into host cytoplasm</keyword>
<keyword id="KW-1173">Viral penetration via permeabilization of host membrane</keyword>
<keyword id="KW-0946">Virion</keyword>
<keyword id="KW-1164">Virus endocytosis by host</keyword>
<keyword id="KW-1160">Virus entry into host cell</keyword>
<dbReference type="EMBL" id="M37899">
    <property type="status" value="NOT_ANNOTATED_CDS"/>
    <property type="molecule type" value="Genomic_DNA"/>
</dbReference>
<dbReference type="PIR" id="D40784">
    <property type="entry name" value="VCPVAD"/>
</dbReference>
<dbReference type="SMR" id="P27453"/>
<dbReference type="Proteomes" id="UP000008473">
    <property type="component" value="Genome"/>
</dbReference>
<dbReference type="GO" id="GO:0039615">
    <property type="term" value="C:T=1 icosahedral viral capsid"/>
    <property type="evidence" value="ECO:0007669"/>
    <property type="project" value="UniProtKB-KW"/>
</dbReference>
<dbReference type="GO" id="GO:0075512">
    <property type="term" value="P:clathrin-dependent endocytosis of virus by host cell"/>
    <property type="evidence" value="ECO:0007669"/>
    <property type="project" value="UniProtKB-KW"/>
</dbReference>
<dbReference type="GO" id="GO:0140267">
    <property type="term" value="P:symbiont entry into host cell via permeabilization of host membrane"/>
    <property type="evidence" value="ECO:0007669"/>
    <property type="project" value="UniProtKB-KW"/>
</dbReference>
<dbReference type="GO" id="GO:0019062">
    <property type="term" value="P:virion attachment to host cell"/>
    <property type="evidence" value="ECO:0007669"/>
    <property type="project" value="UniProtKB-KW"/>
</dbReference>
<gene>
    <name type="primary">VP</name>
</gene>
<feature type="chain" id="PRO_0000039445" description="Capsid protein VP1/VP2">
    <location>
        <begin position="1"/>
        <end position="358"/>
    </location>
</feature>
<feature type="region of interest" description="Disordered" evidence="2">
    <location>
        <begin position="1"/>
        <end position="37"/>
    </location>
</feature>
<feature type="compositionally biased region" description="Basic and acidic residues" evidence="2">
    <location>
        <begin position="1"/>
        <end position="15"/>
    </location>
</feature>
<feature type="compositionally biased region" description="Gly residues" evidence="2">
    <location>
        <begin position="23"/>
        <end position="33"/>
    </location>
</feature>
<proteinExistence type="inferred from homology"/>
<accession>P27453</accession>
<evidence type="ECO:0000250" key="1"/>
<evidence type="ECO:0000256" key="2">
    <source>
        <dbReference type="SAM" id="MobiDB-lite"/>
    </source>
</evidence>
<evidence type="ECO:0000305" key="3"/>
<protein>
    <recommendedName>
        <fullName>Capsid protein VP1/VP2</fullName>
    </recommendedName>
    <alternativeName>
        <fullName>Coat protein VP1/VP2</fullName>
    </alternativeName>
</protein>
<organism>
    <name type="scientific">Aedes densonucleosis virus (strain GKV 002 002)</name>
    <name type="common">Aedes densovirus</name>
    <dbReference type="NCBI Taxonomy" id="10808"/>
    <lineage>
        <taxon>Viruses</taxon>
        <taxon>Monodnaviria</taxon>
        <taxon>Shotokuvirae</taxon>
        <taxon>Cossaviricota</taxon>
        <taxon>Quintoviricetes</taxon>
        <taxon>Piccovirales</taxon>
        <taxon>Parvoviridae</taxon>
        <taxon>Hamaparvovirinae</taxon>
        <taxon>Brevihamaparvovirus</taxon>
        <taxon>Brevihamaparvovirus dipteran1</taxon>
    </lineage>
</organism>